<accession>A4XHU5</accession>
<dbReference type="EMBL" id="CP000679">
    <property type="protein sequence ID" value="ABP66480.1"/>
    <property type="molecule type" value="Genomic_DNA"/>
</dbReference>
<dbReference type="RefSeq" id="WP_011916426.1">
    <property type="nucleotide sequence ID" value="NC_009437.1"/>
</dbReference>
<dbReference type="SMR" id="A4XHU5"/>
<dbReference type="STRING" id="351627.Csac_0864"/>
<dbReference type="KEGG" id="csc:Csac_0864"/>
<dbReference type="eggNOG" id="COG1615">
    <property type="taxonomic scope" value="Bacteria"/>
</dbReference>
<dbReference type="HOGENOM" id="CLU_007733_0_0_9"/>
<dbReference type="OrthoDB" id="9763654at2"/>
<dbReference type="Proteomes" id="UP000000256">
    <property type="component" value="Chromosome"/>
</dbReference>
<dbReference type="GO" id="GO:0005576">
    <property type="term" value="C:extracellular region"/>
    <property type="evidence" value="ECO:0007669"/>
    <property type="project" value="TreeGrafter"/>
</dbReference>
<dbReference type="GO" id="GO:0005886">
    <property type="term" value="C:plasma membrane"/>
    <property type="evidence" value="ECO:0007669"/>
    <property type="project" value="UniProtKB-SubCell"/>
</dbReference>
<dbReference type="HAMAP" id="MF_01600">
    <property type="entry name" value="UPF0182"/>
    <property type="match status" value="1"/>
</dbReference>
<dbReference type="InterPro" id="IPR005372">
    <property type="entry name" value="UPF0182"/>
</dbReference>
<dbReference type="PANTHER" id="PTHR39344">
    <property type="entry name" value="UPF0182 PROTEIN SLL1060"/>
    <property type="match status" value="1"/>
</dbReference>
<dbReference type="PANTHER" id="PTHR39344:SF1">
    <property type="entry name" value="UPF0182 PROTEIN SLL1060"/>
    <property type="match status" value="1"/>
</dbReference>
<dbReference type="Pfam" id="PF03699">
    <property type="entry name" value="UPF0182"/>
    <property type="match status" value="1"/>
</dbReference>
<keyword id="KW-1003">Cell membrane</keyword>
<keyword id="KW-0472">Membrane</keyword>
<keyword id="KW-0812">Transmembrane</keyword>
<keyword id="KW-1133">Transmembrane helix</keyword>
<organism>
    <name type="scientific">Caldicellulosiruptor saccharolyticus (strain ATCC 43494 / DSM 8903 / Tp8T 6331)</name>
    <dbReference type="NCBI Taxonomy" id="351627"/>
    <lineage>
        <taxon>Bacteria</taxon>
        <taxon>Bacillati</taxon>
        <taxon>Bacillota</taxon>
        <taxon>Bacillota incertae sedis</taxon>
        <taxon>Caldicellulosiruptorales</taxon>
        <taxon>Caldicellulosiruptoraceae</taxon>
        <taxon>Caldicellulosiruptor</taxon>
    </lineage>
</organism>
<reference key="1">
    <citation type="submission" date="2007-04" db="EMBL/GenBank/DDBJ databases">
        <title>Genome sequence of the thermophilic hydrogen-producing bacterium Caldicellulosiruptor saccharolyticus DSM 8903.</title>
        <authorList>
            <person name="Copeland A."/>
            <person name="Lucas S."/>
            <person name="Lapidus A."/>
            <person name="Barry K."/>
            <person name="Detter J.C."/>
            <person name="Glavina del Rio T."/>
            <person name="Hammon N."/>
            <person name="Israni S."/>
            <person name="Dalin E."/>
            <person name="Tice H."/>
            <person name="Pitluck S."/>
            <person name="Kiss H."/>
            <person name="Brettin T."/>
            <person name="Bruce D."/>
            <person name="Han C."/>
            <person name="Schmutz J."/>
            <person name="Larimer F."/>
            <person name="Land M."/>
            <person name="Hauser L."/>
            <person name="Kyrpides N."/>
            <person name="Lykidis A."/>
            <person name="van de Werken H.J.G."/>
            <person name="Verhaart M.R.A."/>
            <person name="VanFossen A.L."/>
            <person name="Lewis D.L."/>
            <person name="Nichols J.D."/>
            <person name="Goorissen H.P."/>
            <person name="van Niel E.W.J."/>
            <person name="Stams F.J.M."/>
            <person name="Willquist K.U."/>
            <person name="Ward D.E."/>
            <person name="van der Oost J."/>
            <person name="Kelly R.M."/>
            <person name="Kengen S.M.W."/>
            <person name="Richardson P."/>
        </authorList>
    </citation>
    <scope>NUCLEOTIDE SEQUENCE [LARGE SCALE GENOMIC DNA]</scope>
    <source>
        <strain>ATCC 43494 / DSM 8903 / Tp8T 6331</strain>
    </source>
</reference>
<comment type="subcellular location">
    <subcellularLocation>
        <location evidence="1">Cell membrane</location>
        <topology evidence="1">Multi-pass membrane protein</topology>
    </subcellularLocation>
</comment>
<comment type="similarity">
    <text evidence="1">Belongs to the UPF0182 family.</text>
</comment>
<name>Y864_CALS8</name>
<sequence length="908" mass="105151">MADRIYDYKREKTKRVVKKVGFVISILVILAIVFSIAFDLFLELIQIKEIGRNFVSVFWKNFYVKLSVQVVSFMILFFVFFVNNAVIKRNIERIVGKISLLKKNILNVIVSVLLALIASRYLENNLYIKFLTFKHSKPFNIKDPIFNKDVGYYVFERPFFLSIVNFLFYLVIFVCIYTVVLYIVLYGFAFVSRVNSWGVLYDKKVRSHIFFNLILIFVIKIFTLKYEMEGLLYSFFGEVVGVGYTDYYIRMNYFRLSYIVLVAVILLSIYFFIKGKYANIAKVMLSYIGWAVLGTIIATAFQYFVVSPNEQVYERSFLEKNIKFTRLAYNLENIEEKYFPVDTSGTITAEDLQKNTGTIENIRITDYPTTLAILNQIQRFKQYYIFNDADIAKYTINGKIKSVFISAREINYDGIPTKTYINQKFQYTHGYGVVMSLMTEVTPEGQPKFIIKDIPLKSLDGAPKVTQPRIYYGEKTDPYVIVNTKVDEIDYPEGDSNRLFRYDGKGGIRLTPLNRLIFSYVYKDFRLLVSTAINSNSKILINRSIIERAKKVAPFFDYDTDPYILIDGKGHLVWVLDGYTKTNYYPYSEPTEEGFNYIRNSVKVLIDAYNGTLKFYIVDKNDPIVNVYKSIYPDLFENGDIPRDIAEHIRYPEYIFKVQASVLKRYHMTNPNVFYNKEDLWDFGKHKTPDGSIDYIPPYYSVMKLPDSQKEEMILMVPFTPLKYNTMIAWLAAKSSQENYGKLVLYKFPKGSTVYSPLQVENMIDQDPQISKDLSLWNQGGSKVIRGNLLALPINQKILYIEPIYIASDNASALPEVKRVIAACNGKVVMGSSLNDALSQLVGQQVTPVKDQMQTPSQKENITQVLPSSDLLKIKSLFEDAKKALQQGNWEEFGKKFKELDDMMKNVK</sequence>
<protein>
    <recommendedName>
        <fullName evidence="1">UPF0182 protein Csac_0864</fullName>
    </recommendedName>
</protein>
<evidence type="ECO:0000255" key="1">
    <source>
        <dbReference type="HAMAP-Rule" id="MF_01600"/>
    </source>
</evidence>
<proteinExistence type="inferred from homology"/>
<gene>
    <name type="ordered locus">Csac_0864</name>
</gene>
<feature type="chain" id="PRO_0000335539" description="UPF0182 protein Csac_0864">
    <location>
        <begin position="1"/>
        <end position="908"/>
    </location>
</feature>
<feature type="transmembrane region" description="Helical" evidence="1">
    <location>
        <begin position="22"/>
        <end position="42"/>
    </location>
</feature>
<feature type="transmembrane region" description="Helical" evidence="1">
    <location>
        <begin position="62"/>
        <end position="82"/>
    </location>
</feature>
<feature type="transmembrane region" description="Helical" evidence="1">
    <location>
        <begin position="98"/>
        <end position="118"/>
    </location>
</feature>
<feature type="transmembrane region" description="Helical" evidence="1">
    <location>
        <begin position="166"/>
        <end position="186"/>
    </location>
</feature>
<feature type="transmembrane region" description="Helical" evidence="1">
    <location>
        <begin position="208"/>
        <end position="228"/>
    </location>
</feature>
<feature type="transmembrane region" description="Helical" evidence="1">
    <location>
        <begin position="253"/>
        <end position="273"/>
    </location>
</feature>
<feature type="transmembrane region" description="Helical" evidence="1">
    <location>
        <begin position="286"/>
        <end position="306"/>
    </location>
</feature>